<sequence>MATEYALRMGDGKRVFLAREKIMEEIEAGTANAADLGEIPALSADEMNKLAEILMMPGKAVSVEHGMEIPVTHDIGTIRLDGDQGNSGVGIPSSRLVGCMMHERAFGADTMELGHIDYSFKPVKPVVANECQAMEVCQQNMIIPLFYGAMPNMGLYYTPDGPFENPGDLMKAFKIQEAWDSMEHAAEHLTRDTIWIMQKLFASGADGVNFDTTAAAGDGDFYGTLHAIEALRKEFPEMYIEAGMAGEMVLGMHGNLQYDGVTLAGLWPHQQAPLVAKAGANVFGPVVNTNTSKTSPWNLARAVTFIKEAVKVSSLPCHVDMGMGVGGIPMLETPPIDAVTRASKAMVEIAGVDGIOIGVGDPLGMPISHIMASGMTGMRAAGDLVARMQFSKNMKIKEAKEYVAKKLNVEIRDLADEYIMRELREELNIGVITSVPGSAKGIAAKMNIEKLLGIKINSCELFRKQTGK</sequence>
<dbReference type="EC" id="2.1.1.249"/>
<dbReference type="EMBL" id="AE008384">
    <property type="protein sequence ID" value="AAM31746.1"/>
    <property type="status" value="ALT_SEQ"/>
    <property type="molecule type" value="Genomic_DNA"/>
</dbReference>
<dbReference type="EMBL" id="AE008384">
    <property type="protein sequence ID" value="AAM31747.1"/>
    <property type="status" value="ALT_SEQ"/>
    <property type="molecule type" value="Genomic_DNA"/>
</dbReference>
<dbReference type="KEGG" id="mma:MM_2050"/>
<dbReference type="KEGG" id="mma:MM_2051"/>
<dbReference type="PATRIC" id="fig|192952.21.peg.2354"/>
<dbReference type="eggNOG" id="arCOG06710">
    <property type="taxonomic scope" value="Archaea"/>
</dbReference>
<dbReference type="HOGENOM" id="CLU_2257397_0_0_2"/>
<dbReference type="UniPathway" id="UPA00644"/>
<dbReference type="Proteomes" id="UP000000595">
    <property type="component" value="Chromosome"/>
</dbReference>
<dbReference type="GO" id="GO:0043791">
    <property type="term" value="F:dimethylamine methyltransferase activity"/>
    <property type="evidence" value="ECO:0007669"/>
    <property type="project" value="UniProtKB-EC"/>
</dbReference>
<dbReference type="GO" id="GO:0015948">
    <property type="term" value="P:methanogenesis"/>
    <property type="evidence" value="ECO:0007669"/>
    <property type="project" value="UniProtKB-KW"/>
</dbReference>
<dbReference type="GO" id="GO:0032259">
    <property type="term" value="P:methylation"/>
    <property type="evidence" value="ECO:0007669"/>
    <property type="project" value="UniProtKB-KW"/>
</dbReference>
<dbReference type="InterPro" id="IPR012653">
    <property type="entry name" value="Dimeth_MeTrfase_MtbB"/>
</dbReference>
<dbReference type="NCBIfam" id="TIGR02368">
    <property type="entry name" value="dimeth_PyL"/>
    <property type="match status" value="1"/>
</dbReference>
<dbReference type="Pfam" id="PF09505">
    <property type="entry name" value="Dimeth_Pyl"/>
    <property type="match status" value="1"/>
</dbReference>
<comment type="function">
    <text evidence="1">Catalyzes the transfer of a methyl group from dimethylamine to the corrinoid cofactor of MtbC.</text>
</comment>
<comment type="catalytic activity">
    <reaction>
        <text>Co(I)-[dimethylamine-specific corrinoid protein] + dimethylamine + H(+) = methyl-Co(III)-[dimethylamine-specific corrinoid protein] + methylamine</text>
        <dbReference type="Rhea" id="RHEA:41175"/>
        <dbReference type="Rhea" id="RHEA-COMP:11122"/>
        <dbReference type="Rhea" id="RHEA-COMP:11123"/>
        <dbReference type="ChEBI" id="CHEBI:15378"/>
        <dbReference type="ChEBI" id="CHEBI:58040"/>
        <dbReference type="ChEBI" id="CHEBI:59338"/>
        <dbReference type="ChEBI" id="CHEBI:85033"/>
        <dbReference type="ChEBI" id="CHEBI:85035"/>
        <dbReference type="EC" id="2.1.1.249"/>
    </reaction>
</comment>
<comment type="pathway">
    <text>One-carbon metabolism; methanogenesis from dimethylamine.</text>
</comment>
<comment type="similarity">
    <text evidence="2">Belongs to the dimethylamine methyltransferase family.</text>
</comment>
<comment type="sequence caution" evidence="2">
    <conflict type="erroneous termination">
        <sequence resource="EMBL-CDS" id="AAM31746"/>
    </conflict>
    <text>Truncated C-terminus.</text>
</comment>
<comment type="sequence caution" evidence="2">
    <conflict type="erroneous termination">
        <sequence resource="EMBL-CDS" id="AAM31747"/>
    </conflict>
    <text>Truncated C-terminus.</text>
</comment>
<name>MTBB1_METMA</name>
<keyword id="KW-0484">Methanogenesis</keyword>
<keyword id="KW-0489">Methyltransferase</keyword>
<keyword id="KW-0669">Pyrrolysine</keyword>
<keyword id="KW-0808">Transferase</keyword>
<accession>P58970</accession>
<gene>
    <name type="primary">mtbB1</name>
    <name type="ordered locus">MM_2050/MM_2051</name>
</gene>
<proteinExistence type="inferred from homology"/>
<evidence type="ECO:0000250" key="1"/>
<evidence type="ECO:0000305" key="2"/>
<feature type="chain" id="PRO_0000216566" description="Dimethylamine methyltransferase MtbB1">
    <location>
        <begin position="1"/>
        <end position="468"/>
    </location>
</feature>
<feature type="non-standard amino acid" description="Pyrrolysine" evidence="1">
    <location>
        <position position="356"/>
    </location>
</feature>
<reference key="1">
    <citation type="journal article" date="2002" name="J. Mol. Microbiol. Biotechnol.">
        <title>The genome of Methanosarcina mazei: evidence for lateral gene transfer between Bacteria and Archaea.</title>
        <authorList>
            <person name="Deppenmeier U."/>
            <person name="Johann A."/>
            <person name="Hartsch T."/>
            <person name="Merkl R."/>
            <person name="Schmitz R.A."/>
            <person name="Martinez-Arias R."/>
            <person name="Henne A."/>
            <person name="Wiezer A."/>
            <person name="Baeumer S."/>
            <person name="Jacobi C."/>
            <person name="Brueggemann H."/>
            <person name="Lienard T."/>
            <person name="Christmann A."/>
            <person name="Boemecke M."/>
            <person name="Steckel S."/>
            <person name="Bhattacharyya A."/>
            <person name="Lykidis A."/>
            <person name="Overbeek R."/>
            <person name="Klenk H.-P."/>
            <person name="Gunsalus R.P."/>
            <person name="Fritz H.-J."/>
            <person name="Gottschalk G."/>
        </authorList>
    </citation>
    <scope>NUCLEOTIDE SEQUENCE [LARGE SCALE GENOMIC DNA]</scope>
    <source>
        <strain>ATCC BAA-159 / DSM 3647 / Goe1 / Go1 / JCM 11833 / OCM 88</strain>
    </source>
</reference>
<organism>
    <name type="scientific">Methanosarcina mazei (strain ATCC BAA-159 / DSM 3647 / Goe1 / Go1 / JCM 11833 / OCM 88)</name>
    <name type="common">Methanosarcina frisia</name>
    <dbReference type="NCBI Taxonomy" id="192952"/>
    <lineage>
        <taxon>Archaea</taxon>
        <taxon>Methanobacteriati</taxon>
        <taxon>Methanobacteriota</taxon>
        <taxon>Stenosarchaea group</taxon>
        <taxon>Methanomicrobia</taxon>
        <taxon>Methanosarcinales</taxon>
        <taxon>Methanosarcinaceae</taxon>
        <taxon>Methanosarcina</taxon>
    </lineage>
</organism>
<protein>
    <recommendedName>
        <fullName>Dimethylamine methyltransferase MtbB1</fullName>
        <shortName>DMA methyltransferase 1</shortName>
        <shortName>DMAMT 1</shortName>
        <ecNumber>2.1.1.249</ecNumber>
    </recommendedName>
    <alternativeName>
        <fullName>Dimethylamine--corrinoid protein methyltransferase 1</fullName>
    </alternativeName>
</protein>